<accession>Q8WI06</accession>
<name>PSBJ_PSINU</name>
<comment type="function">
    <text evidence="1">One of the components of the core complex of photosystem II (PSII). PSII is a light-driven water:plastoquinone oxidoreductase that uses light energy to abstract electrons from H(2)O, generating O(2) and a proton gradient subsequently used for ATP formation. It consists of a core antenna complex that captures photons, and an electron transfer chain that converts photonic excitation into a charge separation.</text>
</comment>
<comment type="subunit">
    <text evidence="1">PSII is composed of 1 copy each of membrane proteins PsbA, PsbB, PsbC, PsbD, PsbE, PsbF, PsbH, PsbI, PsbJ, PsbK, PsbL, PsbM, PsbT, PsbX, PsbY, PsbZ, Psb30/Ycf12, at least 3 peripheral proteins of the oxygen-evolving complex and a large number of cofactors. It forms dimeric complexes.</text>
</comment>
<comment type="subcellular location">
    <subcellularLocation>
        <location evidence="1">Plastid</location>
        <location evidence="1">Chloroplast thylakoid membrane</location>
        <topology evidence="1">Single-pass membrane protein</topology>
    </subcellularLocation>
</comment>
<comment type="similarity">
    <text evidence="1">Belongs to the PsbJ family.</text>
</comment>
<sequence length="40" mass="4136">MANTTGRIPLWLVGTVTGTLVIGLMGIFFYGAYSGLGSSL</sequence>
<gene>
    <name evidence="1" type="primary">psbJ</name>
</gene>
<reference key="1">
    <citation type="journal article" date="2004" name="Mol. Biol. Evol.">
        <title>Chloroplast phylogeny indicates that bryophytes are monophyletic.</title>
        <authorList>
            <person name="Nishiyama T."/>
            <person name="Wolf P.G."/>
            <person name="Kugita M."/>
            <person name="Sinclair R.B."/>
            <person name="Sugita M."/>
            <person name="Sugiura C."/>
            <person name="Wakasugi T."/>
            <person name="Yamada K."/>
            <person name="Yoshinaga K."/>
            <person name="Yamaguchi K."/>
            <person name="Ueda K."/>
            <person name="Hasebe M."/>
        </authorList>
    </citation>
    <scope>NUCLEOTIDE SEQUENCE [LARGE SCALE GENOMIC DNA]</scope>
    <source>
        <strain>Kingyoku</strain>
    </source>
</reference>
<keyword id="KW-0150">Chloroplast</keyword>
<keyword id="KW-0472">Membrane</keyword>
<keyword id="KW-0602">Photosynthesis</keyword>
<keyword id="KW-0604">Photosystem II</keyword>
<keyword id="KW-0934">Plastid</keyword>
<keyword id="KW-0674">Reaction center</keyword>
<keyword id="KW-0793">Thylakoid</keyword>
<keyword id="KW-0812">Transmembrane</keyword>
<keyword id="KW-1133">Transmembrane helix</keyword>
<feature type="chain" id="PRO_0000216615" description="Photosystem II reaction center protein J">
    <location>
        <begin position="1"/>
        <end position="40"/>
    </location>
</feature>
<feature type="transmembrane region" description="Helical" evidence="1">
    <location>
        <begin position="8"/>
        <end position="28"/>
    </location>
</feature>
<proteinExistence type="inferred from homology"/>
<organism>
    <name type="scientific">Psilotum nudum</name>
    <name type="common">Whisk fern</name>
    <name type="synonym">Lycopodium nudum</name>
    <dbReference type="NCBI Taxonomy" id="3240"/>
    <lineage>
        <taxon>Eukaryota</taxon>
        <taxon>Viridiplantae</taxon>
        <taxon>Streptophyta</taxon>
        <taxon>Embryophyta</taxon>
        <taxon>Tracheophyta</taxon>
        <taxon>Polypodiopsida</taxon>
        <taxon>Ophioglossidae</taxon>
        <taxon>Psilotales</taxon>
        <taxon>Psilotaceae</taxon>
        <taxon>Psilotum</taxon>
    </lineage>
</organism>
<evidence type="ECO:0000255" key="1">
    <source>
        <dbReference type="HAMAP-Rule" id="MF_01305"/>
    </source>
</evidence>
<dbReference type="EMBL" id="AP004638">
    <property type="protein sequence ID" value="BAB84230.1"/>
    <property type="molecule type" value="Genomic_DNA"/>
</dbReference>
<dbReference type="RefSeq" id="NP_569643.1">
    <property type="nucleotide sequence ID" value="NC_003386.1"/>
</dbReference>
<dbReference type="SMR" id="Q8WI06"/>
<dbReference type="GeneID" id="2545146"/>
<dbReference type="GO" id="GO:0009535">
    <property type="term" value="C:chloroplast thylakoid membrane"/>
    <property type="evidence" value="ECO:0007669"/>
    <property type="project" value="UniProtKB-SubCell"/>
</dbReference>
<dbReference type="GO" id="GO:0009539">
    <property type="term" value="C:photosystem II reaction center"/>
    <property type="evidence" value="ECO:0007669"/>
    <property type="project" value="InterPro"/>
</dbReference>
<dbReference type="GO" id="GO:0015979">
    <property type="term" value="P:photosynthesis"/>
    <property type="evidence" value="ECO:0007669"/>
    <property type="project" value="UniProtKB-UniRule"/>
</dbReference>
<dbReference type="Gene3D" id="6.10.250.2070">
    <property type="match status" value="1"/>
</dbReference>
<dbReference type="HAMAP" id="MF_01305">
    <property type="entry name" value="PSII_PsbJ"/>
    <property type="match status" value="1"/>
</dbReference>
<dbReference type="InterPro" id="IPR002682">
    <property type="entry name" value="PSII_PsbJ"/>
</dbReference>
<dbReference type="InterPro" id="IPR037267">
    <property type="entry name" value="PSII_PsbJ_sf"/>
</dbReference>
<dbReference type="NCBIfam" id="NF002722">
    <property type="entry name" value="PRK02565.1"/>
    <property type="match status" value="1"/>
</dbReference>
<dbReference type="PANTHER" id="PTHR34812">
    <property type="entry name" value="PHOTOSYSTEM II REACTION CENTER PROTEIN J"/>
    <property type="match status" value="1"/>
</dbReference>
<dbReference type="PANTHER" id="PTHR34812:SF3">
    <property type="entry name" value="PHOTOSYSTEM II REACTION CENTER PROTEIN J"/>
    <property type="match status" value="1"/>
</dbReference>
<dbReference type="Pfam" id="PF01788">
    <property type="entry name" value="PsbJ"/>
    <property type="match status" value="1"/>
</dbReference>
<dbReference type="SUPFAM" id="SSF161021">
    <property type="entry name" value="Photosystem II reaction center protein J, PsbJ"/>
    <property type="match status" value="1"/>
</dbReference>
<geneLocation type="chloroplast"/>
<protein>
    <recommendedName>
        <fullName evidence="1">Photosystem II reaction center protein J</fullName>
        <shortName evidence="1">PSII-J</shortName>
    </recommendedName>
</protein>